<proteinExistence type="evidence at protein level"/>
<feature type="signal peptide" evidence="2">
    <location>
        <begin position="1"/>
        <end position="22"/>
    </location>
</feature>
<feature type="chain" id="PRO_0000019315" description="GPI-linked NAD(P)(+)--arginine ADP-ribosyltransferase 1">
    <location>
        <begin position="23"/>
        <end position="295"/>
    </location>
</feature>
<feature type="propeptide" id="PRO_0000019316" description="Removed in mature form" evidence="2">
    <location>
        <begin position="296"/>
        <end position="327"/>
    </location>
</feature>
<feature type="domain" description="TR mART core" evidence="3">
    <location>
        <begin position="73"/>
        <end position="273"/>
    </location>
</feature>
<feature type="active site" evidence="3">
    <location>
        <position position="179"/>
    </location>
</feature>
<feature type="active site" evidence="3">
    <location>
        <position position="202"/>
    </location>
</feature>
<feature type="active site" evidence="3">
    <location>
        <position position="240"/>
    </location>
</feature>
<feature type="binding site" evidence="1">
    <location>
        <position position="121"/>
    </location>
    <ligand>
        <name>NAD(+)</name>
        <dbReference type="ChEBI" id="CHEBI:57540"/>
    </ligand>
</feature>
<feature type="binding site" evidence="1">
    <location>
        <position position="179"/>
    </location>
    <ligand>
        <name>NAD(+)</name>
        <dbReference type="ChEBI" id="CHEBI:57540"/>
    </ligand>
</feature>
<feature type="binding site" evidence="1">
    <location>
        <position position="233"/>
    </location>
    <ligand>
        <name>NAD(+)</name>
        <dbReference type="ChEBI" id="CHEBI:57540"/>
    </ligand>
</feature>
<feature type="lipid moiety-binding region" description="GPI-anchor amidated serine" evidence="2">
    <location>
        <position position="295"/>
    </location>
</feature>
<feature type="glycosylation site" description="N-linked (GlcNAc...) asparagine" evidence="2">
    <location>
        <position position="65"/>
    </location>
</feature>
<feature type="glycosylation site" description="N-linked (GlcNAc...) asparagine" evidence="2">
    <location>
        <position position="253"/>
    </location>
</feature>
<feature type="disulfide bond" evidence="1">
    <location>
        <begin position="53"/>
        <end position="277"/>
    </location>
</feature>
<feature type="disulfide bond" evidence="1">
    <location>
        <begin position="174"/>
        <end position="224"/>
    </location>
</feature>
<gene>
    <name type="primary">ART1</name>
</gene>
<accession>Q03515</accession>
<keyword id="KW-0903">Direct protein sequencing</keyword>
<keyword id="KW-1015">Disulfide bond</keyword>
<keyword id="KW-0325">Glycoprotein</keyword>
<keyword id="KW-0328">Glycosyltransferase</keyword>
<keyword id="KW-0336">GPI-anchor</keyword>
<keyword id="KW-0449">Lipoprotein</keyword>
<keyword id="KW-0472">Membrane</keyword>
<keyword id="KW-0520">NAD</keyword>
<keyword id="KW-0521">NADP</keyword>
<keyword id="KW-0548">Nucleotidyltransferase</keyword>
<keyword id="KW-1185">Reference proteome</keyword>
<keyword id="KW-0703">Sarcoplasmic reticulum</keyword>
<keyword id="KW-0732">Signal</keyword>
<keyword id="KW-0808">Transferase</keyword>
<dbReference type="EC" id="2.4.2.31"/>
<dbReference type="EMBL" id="M98764">
    <property type="protein sequence ID" value="AAA31418.1"/>
    <property type="molecule type" value="mRNA"/>
</dbReference>
<dbReference type="PIR" id="A47239">
    <property type="entry name" value="A47239"/>
</dbReference>
<dbReference type="RefSeq" id="NP_001076139.1">
    <property type="nucleotide sequence ID" value="NM_001082670.1"/>
</dbReference>
<dbReference type="SMR" id="Q03515"/>
<dbReference type="FunCoup" id="Q03515">
    <property type="interactions" value="15"/>
</dbReference>
<dbReference type="STRING" id="9986.ENSOCUP00000018587"/>
<dbReference type="GlyCosmos" id="Q03515">
    <property type="glycosylation" value="2 sites, No reported glycans"/>
</dbReference>
<dbReference type="PaxDb" id="9986-ENSOCUP00000018587"/>
<dbReference type="Ensembl" id="ENSOCUT00000021884.3">
    <property type="protein sequence ID" value="ENSOCUP00000018587.2"/>
    <property type="gene ID" value="ENSOCUG00000022791.3"/>
</dbReference>
<dbReference type="GeneID" id="100009387"/>
<dbReference type="KEGG" id="ocu:100009387"/>
<dbReference type="CTD" id="417"/>
<dbReference type="eggNOG" id="ENOG502QUE9">
    <property type="taxonomic scope" value="Eukaryota"/>
</dbReference>
<dbReference type="GeneTree" id="ENSGT01030000234601"/>
<dbReference type="InParanoid" id="Q03515"/>
<dbReference type="OrthoDB" id="423533at2759"/>
<dbReference type="Proteomes" id="UP000001811">
    <property type="component" value="Chromosome 1"/>
</dbReference>
<dbReference type="Bgee" id="ENSOCUG00000022791">
    <property type="expression patterns" value="Expressed in skeletal muscle tissue and 6 other cell types or tissues"/>
</dbReference>
<dbReference type="ExpressionAtlas" id="Q03515">
    <property type="expression patterns" value="baseline"/>
</dbReference>
<dbReference type="GO" id="GO:0033017">
    <property type="term" value="C:sarcoplasmic reticulum membrane"/>
    <property type="evidence" value="ECO:0007669"/>
    <property type="project" value="UniProtKB-SubCell"/>
</dbReference>
<dbReference type="GO" id="GO:0098552">
    <property type="term" value="C:side of membrane"/>
    <property type="evidence" value="ECO:0007669"/>
    <property type="project" value="UniProtKB-KW"/>
</dbReference>
<dbReference type="GO" id="GO:0003950">
    <property type="term" value="F:NAD+ poly-ADP-ribosyltransferase activity"/>
    <property type="evidence" value="ECO:0007669"/>
    <property type="project" value="TreeGrafter"/>
</dbReference>
<dbReference type="GO" id="GO:0106274">
    <property type="term" value="F:NAD+-protein-arginine ADP-ribosyltransferase activity"/>
    <property type="evidence" value="ECO:0007669"/>
    <property type="project" value="UniProtKB-EC"/>
</dbReference>
<dbReference type="GO" id="GO:0016779">
    <property type="term" value="F:nucleotidyltransferase activity"/>
    <property type="evidence" value="ECO:0007669"/>
    <property type="project" value="UniProtKB-KW"/>
</dbReference>
<dbReference type="FunFam" id="3.90.176.10:FF:000001">
    <property type="entry name" value="NAD(P)(+)--arginine ADP-ribosyltransferase"/>
    <property type="match status" value="1"/>
</dbReference>
<dbReference type="Gene3D" id="3.90.176.10">
    <property type="entry name" value="Toxin ADP-ribosyltransferase, Chain A, domain 1"/>
    <property type="match status" value="1"/>
</dbReference>
<dbReference type="InterPro" id="IPR050999">
    <property type="entry name" value="ADP-ribosyltransferase_ARG"/>
</dbReference>
<dbReference type="InterPro" id="IPR000768">
    <property type="entry name" value="ART"/>
</dbReference>
<dbReference type="PANTHER" id="PTHR10339">
    <property type="entry name" value="ADP-RIBOSYLTRANSFERASE"/>
    <property type="match status" value="1"/>
</dbReference>
<dbReference type="PANTHER" id="PTHR10339:SF19">
    <property type="entry name" value="GPI-LINKED NAD(P)(+)--ARGININE ADP-RIBOSYLTRANSFERASE 1"/>
    <property type="match status" value="1"/>
</dbReference>
<dbReference type="Pfam" id="PF01129">
    <property type="entry name" value="ART"/>
    <property type="match status" value="1"/>
</dbReference>
<dbReference type="PRINTS" id="PR00970">
    <property type="entry name" value="RIBTRNSFRASE"/>
</dbReference>
<dbReference type="SUPFAM" id="SSF56399">
    <property type="entry name" value="ADP-ribosylation"/>
    <property type="match status" value="1"/>
</dbReference>
<dbReference type="PROSITE" id="PS01291">
    <property type="entry name" value="ART"/>
    <property type="match status" value="1"/>
</dbReference>
<dbReference type="PROSITE" id="PS51996">
    <property type="entry name" value="TR_MART"/>
    <property type="match status" value="1"/>
</dbReference>
<sequence>MWVPAVANLLLLSLGLLEAIQAQSHLVTRRDLFSQETPLDMAPASFDDQYVGCAAAMTAALPHLNLTEFQVNKVYADGWALASSQWRERSAWGPEWGLSTTRLPPPPAGFRDEHGVALLAYTANSPLHKEFNAAVRQAGRSRAHYLQHFSFKTLHFLLTEALQLLGRDQRMPRCRQVFRGVHGLRFRPAGPGTTVRLGGFASASLKNVAAQQFGEDTFFGIWTCLGVPIQGYSFFPGEEEVLIPPFETFQVINASRPAQGPARIYLKALGKRSSYNCEYIKEMQCKSRPCHLDNSASAQERLSTAWSLLLLLAFLAVGPFPGSPGLF</sequence>
<evidence type="ECO:0000250" key="1"/>
<evidence type="ECO:0000255" key="2"/>
<evidence type="ECO:0000255" key="3">
    <source>
        <dbReference type="PROSITE-ProRule" id="PRU01340"/>
    </source>
</evidence>
<evidence type="ECO:0000305" key="4"/>
<organism>
    <name type="scientific">Oryctolagus cuniculus</name>
    <name type="common">Rabbit</name>
    <dbReference type="NCBI Taxonomy" id="9986"/>
    <lineage>
        <taxon>Eukaryota</taxon>
        <taxon>Metazoa</taxon>
        <taxon>Chordata</taxon>
        <taxon>Craniata</taxon>
        <taxon>Vertebrata</taxon>
        <taxon>Euteleostomi</taxon>
        <taxon>Mammalia</taxon>
        <taxon>Eutheria</taxon>
        <taxon>Euarchontoglires</taxon>
        <taxon>Glires</taxon>
        <taxon>Lagomorpha</taxon>
        <taxon>Leporidae</taxon>
        <taxon>Oryctolagus</taxon>
    </lineage>
</organism>
<comment type="function">
    <text evidence="1">Has ADP-ribosyltransferase activity toward GLP1R.</text>
</comment>
<comment type="catalytic activity">
    <reaction>
        <text>L-arginyl-[protein] + NAD(+) = N(omega)-(ADP-D-ribosyl)-L-arginyl-[protein] + nicotinamide + H(+)</text>
        <dbReference type="Rhea" id="RHEA:19149"/>
        <dbReference type="Rhea" id="RHEA-COMP:10532"/>
        <dbReference type="Rhea" id="RHEA-COMP:15087"/>
        <dbReference type="ChEBI" id="CHEBI:15378"/>
        <dbReference type="ChEBI" id="CHEBI:17154"/>
        <dbReference type="ChEBI" id="CHEBI:29965"/>
        <dbReference type="ChEBI" id="CHEBI:57540"/>
        <dbReference type="ChEBI" id="CHEBI:142554"/>
        <dbReference type="EC" id="2.4.2.31"/>
    </reaction>
</comment>
<comment type="subcellular location">
    <subcellularLocation>
        <location>Sarcoplasmic reticulum membrane</location>
        <topology>Lipid-anchor</topology>
        <topology>GPI-anchor</topology>
    </subcellularLocation>
</comment>
<comment type="tissue specificity">
    <text>Primarily in skeletal and cardiac muscle.</text>
</comment>
<comment type="similarity">
    <text evidence="4">Belongs to the Arg-specific ADP-ribosyltransferase family.</text>
</comment>
<name>NAR1_RABIT</name>
<reference key="1">
    <citation type="journal article" date="1992" name="Proc. Natl. Acad. Sci. U.S.A.">
        <title>Molecular characterization of NAD:arginine ADP-ribosyltransferase from rabbit skeletal muscle.</title>
        <authorList>
            <person name="Zolkiewska A."/>
            <person name="Nightingale M.S."/>
            <person name="Moss J."/>
        </authorList>
    </citation>
    <scope>NUCLEOTIDE SEQUENCE [MRNA]</scope>
    <scope>PARTIAL PROTEIN SEQUENCE</scope>
    <source>
        <tissue>Skeletal muscle</tissue>
    </source>
</reference>
<protein>
    <recommendedName>
        <fullName>GPI-linked NAD(P)(+)--arginine ADP-ribosyltransferase 1</fullName>
        <ecNumber>2.4.2.31</ecNumber>
    </recommendedName>
    <alternativeName>
        <fullName>ADP-ribosyltransferase C2 and C3 toxin-like 1</fullName>
        <shortName>ARTC1</shortName>
    </alternativeName>
    <alternativeName>
        <fullName>Mono(ADP-ribosyl)transferase 1</fullName>
    </alternativeName>
    <cdAntigenName>CD296</cdAntigenName>
</protein>